<accession>A5VSU9</accession>
<reference key="1">
    <citation type="journal article" date="2009" name="PLoS ONE">
        <title>Genome degradation in Brucella ovis corresponds with narrowing of its host range and tissue tropism.</title>
        <authorList>
            <person name="Tsolis R.M."/>
            <person name="Seshadri R."/>
            <person name="Santos R.L."/>
            <person name="Sangari F.J."/>
            <person name="Lobo J.M."/>
            <person name="de Jong M.F."/>
            <person name="Ren Q."/>
            <person name="Myers G."/>
            <person name="Brinkac L.M."/>
            <person name="Nelson W.C."/>
            <person name="Deboy R.T."/>
            <person name="Angiuoli S."/>
            <person name="Khouri H."/>
            <person name="Dimitrov G."/>
            <person name="Robinson J.R."/>
            <person name="Mulligan S."/>
            <person name="Walker R.L."/>
            <person name="Elzer P.E."/>
            <person name="Hassan K.A."/>
            <person name="Paulsen I.T."/>
        </authorList>
    </citation>
    <scope>NUCLEOTIDE SEQUENCE [LARGE SCALE GENOMIC DNA]</scope>
    <source>
        <strain>ATCC 25840 / 63/290 / NCTC 10512</strain>
    </source>
</reference>
<name>Y1904_BRUO2</name>
<sequence>MENEPDTICILVDADACPVKAEIYRVAERHNLPVVIVANSFIAIPREAQRVERVVVSGNLDAADDWIAEHSRPGAVVVTADIPLASRALEKGASVIAPNGRIHTQSTIGNTLATRNLMDSLRSAGEVTGGPAPFAPKDRSAFLSALDLAIVRLKRAGFHAS</sequence>
<comment type="similarity">
    <text evidence="1">Belongs to the UPF0178 family.</text>
</comment>
<proteinExistence type="inferred from homology"/>
<organism>
    <name type="scientific">Brucella ovis (strain ATCC 25840 / 63/290 / NCTC 10512)</name>
    <dbReference type="NCBI Taxonomy" id="444178"/>
    <lineage>
        <taxon>Bacteria</taxon>
        <taxon>Pseudomonadati</taxon>
        <taxon>Pseudomonadota</taxon>
        <taxon>Alphaproteobacteria</taxon>
        <taxon>Hyphomicrobiales</taxon>
        <taxon>Brucellaceae</taxon>
        <taxon>Brucella/Ochrobactrum group</taxon>
        <taxon>Brucella</taxon>
    </lineage>
</organism>
<gene>
    <name type="ordered locus">BOV_1904</name>
</gene>
<evidence type="ECO:0000255" key="1">
    <source>
        <dbReference type="HAMAP-Rule" id="MF_00489"/>
    </source>
</evidence>
<protein>
    <recommendedName>
        <fullName evidence="1">UPF0178 protein BOV_1904</fullName>
    </recommendedName>
</protein>
<dbReference type="EMBL" id="CP000708">
    <property type="protein sequence ID" value="ABQ61176.1"/>
    <property type="molecule type" value="Genomic_DNA"/>
</dbReference>
<dbReference type="RefSeq" id="WP_004687710.1">
    <property type="nucleotide sequence ID" value="NC_009505.1"/>
</dbReference>
<dbReference type="GeneID" id="45125243"/>
<dbReference type="KEGG" id="bov:BOV_1904"/>
<dbReference type="HOGENOM" id="CLU_106619_2_1_5"/>
<dbReference type="PhylomeDB" id="A5VSU9"/>
<dbReference type="Proteomes" id="UP000006383">
    <property type="component" value="Chromosome I"/>
</dbReference>
<dbReference type="CDD" id="cd18720">
    <property type="entry name" value="PIN_YqxD-like"/>
    <property type="match status" value="1"/>
</dbReference>
<dbReference type="HAMAP" id="MF_00489">
    <property type="entry name" value="UPF0178"/>
    <property type="match status" value="1"/>
</dbReference>
<dbReference type="InterPro" id="IPR003791">
    <property type="entry name" value="UPF0178"/>
</dbReference>
<dbReference type="NCBIfam" id="NF001095">
    <property type="entry name" value="PRK00124.1"/>
    <property type="match status" value="1"/>
</dbReference>
<dbReference type="PANTHER" id="PTHR35146">
    <property type="entry name" value="UPF0178 PROTEIN YAII"/>
    <property type="match status" value="1"/>
</dbReference>
<dbReference type="PANTHER" id="PTHR35146:SF1">
    <property type="entry name" value="UPF0178 PROTEIN YAII"/>
    <property type="match status" value="1"/>
</dbReference>
<dbReference type="Pfam" id="PF02639">
    <property type="entry name" value="DUF188"/>
    <property type="match status" value="1"/>
</dbReference>
<feature type="chain" id="PRO_1000014410" description="UPF0178 protein BOV_1904">
    <location>
        <begin position="1"/>
        <end position="161"/>
    </location>
</feature>